<feature type="chain" id="PRO_0000335043" description="Glutamyl-tRNA reductase">
    <location>
        <begin position="1"/>
        <end position="433"/>
    </location>
</feature>
<feature type="active site" description="Nucleophile" evidence="1">
    <location>
        <position position="50"/>
    </location>
</feature>
<feature type="binding site" evidence="1">
    <location>
        <begin position="49"/>
        <end position="52"/>
    </location>
    <ligand>
        <name>substrate</name>
    </ligand>
</feature>
<feature type="binding site" evidence="1">
    <location>
        <position position="114"/>
    </location>
    <ligand>
        <name>substrate</name>
    </ligand>
</feature>
<feature type="binding site" evidence="1">
    <location>
        <begin position="119"/>
        <end position="121"/>
    </location>
    <ligand>
        <name>substrate</name>
    </ligand>
</feature>
<feature type="binding site" evidence="1">
    <location>
        <position position="125"/>
    </location>
    <ligand>
        <name>substrate</name>
    </ligand>
</feature>
<feature type="binding site" evidence="1">
    <location>
        <begin position="201"/>
        <end position="206"/>
    </location>
    <ligand>
        <name>NADP(+)</name>
        <dbReference type="ChEBI" id="CHEBI:58349"/>
    </ligand>
</feature>
<feature type="site" description="Important for activity" evidence="1">
    <location>
        <position position="104"/>
    </location>
</feature>
<evidence type="ECO:0000255" key="1">
    <source>
        <dbReference type="HAMAP-Rule" id="MF_00087"/>
    </source>
</evidence>
<evidence type="ECO:0000305" key="2"/>
<protein>
    <recommendedName>
        <fullName evidence="1">Glutamyl-tRNA reductase</fullName>
        <shortName evidence="1">GluTR</shortName>
        <ecNumber evidence="1">1.2.1.70</ecNumber>
    </recommendedName>
</protein>
<keyword id="KW-0521">NADP</keyword>
<keyword id="KW-0560">Oxidoreductase</keyword>
<keyword id="KW-0627">Porphyrin biosynthesis</keyword>
<accession>Q0I3Q6</accession>
<gene>
    <name evidence="1" type="primary">hemA</name>
    <name type="ordered locus">HS_0810</name>
</gene>
<sequence length="433" mass="49076">MTILVLGINHKTASVALREKVAFSDEKRLLALKQIKQTQLAESAVILSTCNRTEVYLHNKNVGPQNDEVWLDSCVQWFADIHQVDLEELKSCLYSQQNLQASRHLMRVASGLDSLILGEPQILGQVKQAYQMSEEYYSLHSDIGMMSTELSRLFQKTFATAKRVRTETHIGESAVSVAYAACSLARQIFDSLRNLNILLVGAGETIELVSRHLLRHGVNGLAIANRTLSRAEKLVEKLETTQKIDIFSLDRLSEGLKRADIVITSTGSPHVLISRNLIEQAQQMRHYKPMLIVDIAVPRDVEESAGEIESVYHYTVDDLHNIIQYNINQREQASQQAEHIIQQESADFFEWLKVHQFSNLIRNYRESAEIIRQDLLEKALQALQNGENTEQVLQELSHKLTKKLIHQPTQAMQTMVKAGNTEGLQAFSHAVKF</sequence>
<dbReference type="EC" id="1.2.1.70" evidence="1"/>
<dbReference type="EMBL" id="CP000436">
    <property type="protein sequence ID" value="ABI25085.1"/>
    <property type="status" value="ALT_INIT"/>
    <property type="molecule type" value="Genomic_DNA"/>
</dbReference>
<dbReference type="SMR" id="Q0I3Q6"/>
<dbReference type="KEGG" id="hso:HS_0810"/>
<dbReference type="eggNOG" id="COG0373">
    <property type="taxonomic scope" value="Bacteria"/>
</dbReference>
<dbReference type="HOGENOM" id="CLU_035113_2_2_6"/>
<dbReference type="UniPathway" id="UPA00251">
    <property type="reaction ID" value="UER00316"/>
</dbReference>
<dbReference type="GO" id="GO:0008883">
    <property type="term" value="F:glutamyl-tRNA reductase activity"/>
    <property type="evidence" value="ECO:0007669"/>
    <property type="project" value="UniProtKB-UniRule"/>
</dbReference>
<dbReference type="GO" id="GO:0050661">
    <property type="term" value="F:NADP binding"/>
    <property type="evidence" value="ECO:0007669"/>
    <property type="project" value="InterPro"/>
</dbReference>
<dbReference type="GO" id="GO:0019353">
    <property type="term" value="P:protoporphyrinogen IX biosynthetic process from glutamate"/>
    <property type="evidence" value="ECO:0007669"/>
    <property type="project" value="TreeGrafter"/>
</dbReference>
<dbReference type="CDD" id="cd05213">
    <property type="entry name" value="NAD_bind_Glutamyl_tRNA_reduct"/>
    <property type="match status" value="1"/>
</dbReference>
<dbReference type="FunFam" id="3.30.460.30:FF:000001">
    <property type="entry name" value="Glutamyl-tRNA reductase"/>
    <property type="match status" value="1"/>
</dbReference>
<dbReference type="FunFam" id="3.40.50.720:FF:000031">
    <property type="entry name" value="Glutamyl-tRNA reductase"/>
    <property type="match status" value="1"/>
</dbReference>
<dbReference type="Gene3D" id="3.30.460.30">
    <property type="entry name" value="Glutamyl-tRNA reductase, N-terminal domain"/>
    <property type="match status" value="1"/>
</dbReference>
<dbReference type="Gene3D" id="3.40.50.720">
    <property type="entry name" value="NAD(P)-binding Rossmann-like Domain"/>
    <property type="match status" value="1"/>
</dbReference>
<dbReference type="HAMAP" id="MF_00087">
    <property type="entry name" value="Glu_tRNA_reductase"/>
    <property type="match status" value="1"/>
</dbReference>
<dbReference type="InterPro" id="IPR000343">
    <property type="entry name" value="4pyrrol_synth_GluRdtase"/>
</dbReference>
<dbReference type="InterPro" id="IPR015896">
    <property type="entry name" value="4pyrrol_synth_GluRdtase_dimer"/>
</dbReference>
<dbReference type="InterPro" id="IPR015895">
    <property type="entry name" value="4pyrrol_synth_GluRdtase_N"/>
</dbReference>
<dbReference type="InterPro" id="IPR018214">
    <property type="entry name" value="GluRdtase_CS"/>
</dbReference>
<dbReference type="InterPro" id="IPR036453">
    <property type="entry name" value="GluRdtase_dimer_dom_sf"/>
</dbReference>
<dbReference type="InterPro" id="IPR036343">
    <property type="entry name" value="GluRdtase_N_sf"/>
</dbReference>
<dbReference type="InterPro" id="IPR036291">
    <property type="entry name" value="NAD(P)-bd_dom_sf"/>
</dbReference>
<dbReference type="InterPro" id="IPR006151">
    <property type="entry name" value="Shikm_DH/Glu-tRNA_Rdtase"/>
</dbReference>
<dbReference type="NCBIfam" id="TIGR01035">
    <property type="entry name" value="hemA"/>
    <property type="match status" value="1"/>
</dbReference>
<dbReference type="PANTHER" id="PTHR43013">
    <property type="entry name" value="GLUTAMYL-TRNA REDUCTASE"/>
    <property type="match status" value="1"/>
</dbReference>
<dbReference type="PANTHER" id="PTHR43013:SF1">
    <property type="entry name" value="GLUTAMYL-TRNA REDUCTASE"/>
    <property type="match status" value="1"/>
</dbReference>
<dbReference type="Pfam" id="PF00745">
    <property type="entry name" value="GlutR_dimer"/>
    <property type="match status" value="1"/>
</dbReference>
<dbReference type="Pfam" id="PF05201">
    <property type="entry name" value="GlutR_N"/>
    <property type="match status" value="1"/>
</dbReference>
<dbReference type="Pfam" id="PF01488">
    <property type="entry name" value="Shikimate_DH"/>
    <property type="match status" value="1"/>
</dbReference>
<dbReference type="PIRSF" id="PIRSF000445">
    <property type="entry name" value="4pyrrol_synth_GluRdtase"/>
    <property type="match status" value="1"/>
</dbReference>
<dbReference type="SUPFAM" id="SSF69742">
    <property type="entry name" value="Glutamyl tRNA-reductase catalytic, N-terminal domain"/>
    <property type="match status" value="1"/>
</dbReference>
<dbReference type="SUPFAM" id="SSF69075">
    <property type="entry name" value="Glutamyl tRNA-reductase dimerization domain"/>
    <property type="match status" value="1"/>
</dbReference>
<dbReference type="SUPFAM" id="SSF51735">
    <property type="entry name" value="NAD(P)-binding Rossmann-fold domains"/>
    <property type="match status" value="1"/>
</dbReference>
<dbReference type="PROSITE" id="PS00747">
    <property type="entry name" value="GLUTR"/>
    <property type="match status" value="1"/>
</dbReference>
<comment type="function">
    <text evidence="1">Catalyzes the NADPH-dependent reduction of glutamyl-tRNA(Glu) to glutamate 1-semialdehyde (GSA).</text>
</comment>
<comment type="catalytic activity">
    <reaction evidence="1">
        <text>(S)-4-amino-5-oxopentanoate + tRNA(Glu) + NADP(+) = L-glutamyl-tRNA(Glu) + NADPH + H(+)</text>
        <dbReference type="Rhea" id="RHEA:12344"/>
        <dbReference type="Rhea" id="RHEA-COMP:9663"/>
        <dbReference type="Rhea" id="RHEA-COMP:9680"/>
        <dbReference type="ChEBI" id="CHEBI:15378"/>
        <dbReference type="ChEBI" id="CHEBI:57501"/>
        <dbReference type="ChEBI" id="CHEBI:57783"/>
        <dbReference type="ChEBI" id="CHEBI:58349"/>
        <dbReference type="ChEBI" id="CHEBI:78442"/>
        <dbReference type="ChEBI" id="CHEBI:78520"/>
        <dbReference type="EC" id="1.2.1.70"/>
    </reaction>
</comment>
<comment type="pathway">
    <text evidence="1">Porphyrin-containing compound metabolism; protoporphyrin-IX biosynthesis; 5-aminolevulinate from L-glutamyl-tRNA(Glu): step 1/2.</text>
</comment>
<comment type="subunit">
    <text evidence="1">Homodimer.</text>
</comment>
<comment type="domain">
    <text evidence="1">Possesses an unusual extended V-shaped dimeric structure with each monomer consisting of three distinct domains arranged along a curved 'spinal' alpha-helix. The N-terminal catalytic domain specifically recognizes the glutamate moiety of the substrate. The second domain is the NADPH-binding domain, and the third C-terminal domain is responsible for dimerization.</text>
</comment>
<comment type="miscellaneous">
    <text evidence="1">During catalysis, the active site Cys acts as a nucleophile attacking the alpha-carbonyl group of tRNA-bound glutamate with the formation of a thioester intermediate between enzyme and glutamate, and the concomitant release of tRNA(Glu). The thioester intermediate is finally reduced by direct hydride transfer from NADPH, to form the product GSA.</text>
</comment>
<comment type="similarity">
    <text evidence="1">Belongs to the glutamyl-tRNA reductase family.</text>
</comment>
<comment type="sequence caution" evidence="2">
    <conflict type="erroneous initiation">
        <sequence resource="EMBL-CDS" id="ABI25085"/>
    </conflict>
</comment>
<organism>
    <name type="scientific">Histophilus somni (strain 129Pt)</name>
    <name type="common">Haemophilus somnus</name>
    <dbReference type="NCBI Taxonomy" id="205914"/>
    <lineage>
        <taxon>Bacteria</taxon>
        <taxon>Pseudomonadati</taxon>
        <taxon>Pseudomonadota</taxon>
        <taxon>Gammaproteobacteria</taxon>
        <taxon>Pasteurellales</taxon>
        <taxon>Pasteurellaceae</taxon>
        <taxon>Histophilus</taxon>
    </lineage>
</organism>
<proteinExistence type="inferred from homology"/>
<reference key="1">
    <citation type="journal article" date="2007" name="J. Bacteriol.">
        <title>Complete genome sequence of Haemophilus somnus (Histophilus somni) strain 129Pt and comparison to Haemophilus ducreyi 35000HP and Haemophilus influenzae Rd.</title>
        <authorList>
            <person name="Challacombe J.F."/>
            <person name="Duncan A.J."/>
            <person name="Brettin T.S."/>
            <person name="Bruce D."/>
            <person name="Chertkov O."/>
            <person name="Detter J.C."/>
            <person name="Han C.S."/>
            <person name="Misra M."/>
            <person name="Richardson P."/>
            <person name="Tapia R."/>
            <person name="Thayer N."/>
            <person name="Xie G."/>
            <person name="Inzana T.J."/>
        </authorList>
    </citation>
    <scope>NUCLEOTIDE SEQUENCE [LARGE SCALE GENOMIC DNA]</scope>
    <source>
        <strain>129Pt</strain>
    </source>
</reference>
<name>HEM1_HISS1</name>